<protein>
    <recommendedName>
        <fullName>Cationic amino acid transporter 4, vacuolar</fullName>
    </recommendedName>
</protein>
<evidence type="ECO:0000250" key="1"/>
<evidence type="ECO:0000255" key="2"/>
<evidence type="ECO:0000269" key="3">
    <source>
    </source>
</evidence>
<evidence type="ECO:0000269" key="4">
    <source>
    </source>
</evidence>
<evidence type="ECO:0000305" key="5"/>
<feature type="chain" id="PRO_0000415780" description="Cationic amino acid transporter 4, vacuolar">
    <location>
        <begin position="1"/>
        <end position="600"/>
    </location>
</feature>
<feature type="topological domain" description="Cytoplasmic" evidence="2">
    <location>
        <begin position="1"/>
        <end position="32"/>
    </location>
</feature>
<feature type="transmembrane region" description="Helical" evidence="2">
    <location>
        <begin position="33"/>
        <end position="53"/>
    </location>
</feature>
<feature type="topological domain" description="Vacuolar" evidence="2">
    <location>
        <begin position="54"/>
        <end position="60"/>
    </location>
</feature>
<feature type="transmembrane region" description="Helical" evidence="2">
    <location>
        <begin position="61"/>
        <end position="81"/>
    </location>
</feature>
<feature type="topological domain" description="Cytoplasmic" evidence="2">
    <location>
        <begin position="82"/>
        <end position="92"/>
    </location>
</feature>
<feature type="transmembrane region" description="Helical" evidence="2">
    <location>
        <begin position="93"/>
        <end position="115"/>
    </location>
</feature>
<feature type="topological domain" description="Vacuolar" evidence="2">
    <location>
        <begin position="116"/>
        <end position="152"/>
    </location>
</feature>
<feature type="transmembrane region" description="Helical" evidence="2">
    <location>
        <begin position="153"/>
        <end position="173"/>
    </location>
</feature>
<feature type="topological domain" description="Cytoplasmic" evidence="2">
    <location>
        <begin position="174"/>
        <end position="184"/>
    </location>
</feature>
<feature type="transmembrane region" description="Helical" evidence="2">
    <location>
        <begin position="185"/>
        <end position="205"/>
    </location>
</feature>
<feature type="topological domain" description="Vacuolar" evidence="2">
    <location>
        <begin position="206"/>
        <end position="220"/>
    </location>
</feature>
<feature type="transmembrane region" description="Helical" evidence="2">
    <location>
        <begin position="221"/>
        <end position="241"/>
    </location>
</feature>
<feature type="topological domain" description="Cytoplasmic" evidence="2">
    <location>
        <begin position="242"/>
        <end position="264"/>
    </location>
</feature>
<feature type="transmembrane region" description="Helical" evidence="2">
    <location>
        <begin position="265"/>
        <end position="285"/>
    </location>
</feature>
<feature type="topological domain" description="Vacuolar" evidence="2">
    <location>
        <begin position="286"/>
        <end position="308"/>
    </location>
</feature>
<feature type="transmembrane region" description="Helical" evidence="2">
    <location>
        <begin position="309"/>
        <end position="329"/>
    </location>
</feature>
<feature type="topological domain" description="Cytoplasmic" evidence="2">
    <location>
        <begin position="330"/>
        <end position="360"/>
    </location>
</feature>
<feature type="transmembrane region" description="Helical" evidence="2">
    <location>
        <begin position="361"/>
        <end position="381"/>
    </location>
</feature>
<feature type="topological domain" description="Vacuolar" evidence="2">
    <location>
        <position position="382"/>
    </location>
</feature>
<feature type="transmembrane region" description="Helical" evidence="2">
    <location>
        <begin position="383"/>
        <end position="403"/>
    </location>
</feature>
<feature type="topological domain" description="Cytoplasmic" evidence="2">
    <location>
        <begin position="404"/>
        <end position="462"/>
    </location>
</feature>
<feature type="transmembrane region" description="Helical" evidence="2">
    <location>
        <begin position="463"/>
        <end position="483"/>
    </location>
</feature>
<feature type="topological domain" description="Vacuolar" evidence="2">
    <location>
        <begin position="484"/>
        <end position="492"/>
    </location>
</feature>
<feature type="transmembrane region" description="Helical" evidence="2">
    <location>
        <begin position="493"/>
        <end position="513"/>
    </location>
</feature>
<feature type="topological domain" description="Cytoplasmic" evidence="2">
    <location>
        <begin position="514"/>
        <end position="528"/>
    </location>
</feature>
<feature type="transmembrane region" description="Helical" evidence="2">
    <location>
        <begin position="529"/>
        <end position="549"/>
    </location>
</feature>
<feature type="topological domain" description="Vacuolar" evidence="2">
    <location>
        <position position="550"/>
    </location>
</feature>
<feature type="transmembrane region" description="Helical" evidence="2">
    <location>
        <begin position="551"/>
        <end position="571"/>
    </location>
</feature>
<feature type="topological domain" description="Cytoplasmic" evidence="2">
    <location>
        <begin position="572"/>
        <end position="600"/>
    </location>
</feature>
<sequence length="600" mass="63639">MNSLVRRKQVDSVHLIKNDGPHQLAKKLSAVDLVAIGVGTTIGAGVYILVGTVAREHTGPALAVSFFIAGVAAALSACCYAELASRCPSAGSAYHYAYICLGEGIAWLVGWALVLDYTIGGSAIARGITPNLASFFGGLDNLPVFLARQTIPGVGIVVDPCAALLIMIVTILLCFGIKESSTVQAIVTSVNVCTLVFIIVVGGYLACKTGWVGYDLPSGYFPFGLNGILAGSAVVFFSYIGFDTVTSTAEEVKNPQRDLPLGIGIALLICCILYMLLSVVIVGLVPYYSLNPDTPISSAFGDSGMQWAAYILTTGAITALCASLLGSLLAQPRIFMAMARDGLLPAFFSEISPRTQVPVKSTIAIGVLAAALAFFMDVAQLSEMVSVGTLMAFTAVAVCVLVLRYVPPDGVPLSSSSQTLSDTDESRAETENFLVDAIESSDSPLLGNETARDEKYFGKRRKIAAWSIALVCIGVLGLASAASAERLPSFPRFTICGVSAVILLGSLITLGYIDEDEERHNFGHKGGFLCPFVPYLPVLCILINTYLIINIGAGTWIRVLIWLLIGSMIYIFYGRSHSLLNNAVYVPTMTCTRKTTDHLA</sequence>
<dbReference type="EMBL" id="AC009540">
    <property type="protein sequence ID" value="AAF00645.1"/>
    <property type="status" value="ALT_SEQ"/>
    <property type="molecule type" value="Genomic_DNA"/>
</dbReference>
<dbReference type="EMBL" id="CP002686">
    <property type="protein sequence ID" value="AEE73975.2"/>
    <property type="molecule type" value="Genomic_DNA"/>
</dbReference>
<dbReference type="EMBL" id="AY062508">
    <property type="protein sequence ID" value="AAL32586.1"/>
    <property type="molecule type" value="mRNA"/>
</dbReference>
<dbReference type="EMBL" id="BT008369">
    <property type="protein sequence ID" value="AAP37728.1"/>
    <property type="molecule type" value="mRNA"/>
</dbReference>
<dbReference type="RefSeq" id="NP_001154586.1">
    <property type="nucleotide sequence ID" value="NM_001161114.2"/>
</dbReference>
<dbReference type="SMR" id="Q8W4K3"/>
<dbReference type="BioGRID" id="6509">
    <property type="interactions" value="2"/>
</dbReference>
<dbReference type="FunCoup" id="Q8W4K3">
    <property type="interactions" value="1013"/>
</dbReference>
<dbReference type="IntAct" id="Q8W4K3">
    <property type="interactions" value="2"/>
</dbReference>
<dbReference type="STRING" id="3702.Q8W4K3"/>
<dbReference type="TCDB" id="2.A.3.3.14">
    <property type="family name" value="the amino acid-polyamine-organocation (apc) family"/>
</dbReference>
<dbReference type="iPTMnet" id="Q8W4K3"/>
<dbReference type="PaxDb" id="3702-AT3G03720.1"/>
<dbReference type="ProteomicsDB" id="240537"/>
<dbReference type="EnsemblPlants" id="AT3G03720.1">
    <property type="protein sequence ID" value="AT3G03720.1"/>
    <property type="gene ID" value="AT3G03720"/>
</dbReference>
<dbReference type="GeneID" id="821176"/>
<dbReference type="Gramene" id="AT3G03720.1">
    <property type="protein sequence ID" value="AT3G03720.1"/>
    <property type="gene ID" value="AT3G03720"/>
</dbReference>
<dbReference type="KEGG" id="ath:AT3G03720"/>
<dbReference type="Araport" id="AT3G03720"/>
<dbReference type="TAIR" id="AT3G03720">
    <property type="gene designation" value="CAT4"/>
</dbReference>
<dbReference type="eggNOG" id="KOG1286">
    <property type="taxonomic scope" value="Eukaryota"/>
</dbReference>
<dbReference type="HOGENOM" id="CLU_007946_15_1_1"/>
<dbReference type="InParanoid" id="Q8W4K3"/>
<dbReference type="OMA" id="TRVWFSM"/>
<dbReference type="PhylomeDB" id="Q8W4K3"/>
<dbReference type="PRO" id="PR:Q8W4K3"/>
<dbReference type="Proteomes" id="UP000006548">
    <property type="component" value="Chromosome 3"/>
</dbReference>
<dbReference type="ExpressionAtlas" id="Q8W4K3">
    <property type="expression patterns" value="baseline and differential"/>
</dbReference>
<dbReference type="GO" id="GO:0000325">
    <property type="term" value="C:plant-type vacuole"/>
    <property type="evidence" value="ECO:0007005"/>
    <property type="project" value="TAIR"/>
</dbReference>
<dbReference type="GO" id="GO:0009705">
    <property type="term" value="C:plant-type vacuole membrane"/>
    <property type="evidence" value="ECO:0000314"/>
    <property type="project" value="TAIR"/>
</dbReference>
<dbReference type="GO" id="GO:0022857">
    <property type="term" value="F:transmembrane transporter activity"/>
    <property type="evidence" value="ECO:0007669"/>
    <property type="project" value="InterPro"/>
</dbReference>
<dbReference type="GO" id="GO:0006865">
    <property type="term" value="P:amino acid transport"/>
    <property type="evidence" value="ECO:0007669"/>
    <property type="project" value="UniProtKB-KW"/>
</dbReference>
<dbReference type="FunFam" id="1.20.1740.10:FF:000010">
    <property type="entry name" value="probable cationic amino acid transporter"/>
    <property type="match status" value="1"/>
</dbReference>
<dbReference type="Gene3D" id="1.20.1740.10">
    <property type="entry name" value="Amino acid/polyamine transporter I"/>
    <property type="match status" value="2"/>
</dbReference>
<dbReference type="InterPro" id="IPR002293">
    <property type="entry name" value="AA/rel_permease1"/>
</dbReference>
<dbReference type="InterPro" id="IPR029485">
    <property type="entry name" value="CAT_C"/>
</dbReference>
<dbReference type="PANTHER" id="PTHR43243:SF15">
    <property type="entry name" value="CATIONIC AMINO ACID TRANSPORTER 4, VACUOLAR"/>
    <property type="match status" value="1"/>
</dbReference>
<dbReference type="PANTHER" id="PTHR43243">
    <property type="entry name" value="INNER MEMBRANE TRANSPORTER YGJI-RELATED"/>
    <property type="match status" value="1"/>
</dbReference>
<dbReference type="Pfam" id="PF13520">
    <property type="entry name" value="AA_permease_2"/>
    <property type="match status" value="1"/>
</dbReference>
<dbReference type="Pfam" id="PF13906">
    <property type="entry name" value="AA_permease_C"/>
    <property type="match status" value="1"/>
</dbReference>
<dbReference type="PIRSF" id="PIRSF006060">
    <property type="entry name" value="AA_transporter"/>
    <property type="match status" value="1"/>
</dbReference>
<reference key="1">
    <citation type="journal article" date="2000" name="Nature">
        <title>Sequence and analysis of chromosome 3 of the plant Arabidopsis thaliana.</title>
        <authorList>
            <person name="Salanoubat M."/>
            <person name="Lemcke K."/>
            <person name="Rieger M."/>
            <person name="Ansorge W."/>
            <person name="Unseld M."/>
            <person name="Fartmann B."/>
            <person name="Valle G."/>
            <person name="Bloecker H."/>
            <person name="Perez-Alonso M."/>
            <person name="Obermaier B."/>
            <person name="Delseny M."/>
            <person name="Boutry M."/>
            <person name="Grivell L.A."/>
            <person name="Mache R."/>
            <person name="Puigdomenech P."/>
            <person name="De Simone V."/>
            <person name="Choisne N."/>
            <person name="Artiguenave F."/>
            <person name="Robert C."/>
            <person name="Brottier P."/>
            <person name="Wincker P."/>
            <person name="Cattolico L."/>
            <person name="Weissenbach J."/>
            <person name="Saurin W."/>
            <person name="Quetier F."/>
            <person name="Schaefer M."/>
            <person name="Mueller-Auer S."/>
            <person name="Gabel C."/>
            <person name="Fuchs M."/>
            <person name="Benes V."/>
            <person name="Wurmbach E."/>
            <person name="Drzonek H."/>
            <person name="Erfle H."/>
            <person name="Jordan N."/>
            <person name="Bangert S."/>
            <person name="Wiedelmann R."/>
            <person name="Kranz H."/>
            <person name="Voss H."/>
            <person name="Holland R."/>
            <person name="Brandt P."/>
            <person name="Nyakatura G."/>
            <person name="Vezzi A."/>
            <person name="D'Angelo M."/>
            <person name="Pallavicini A."/>
            <person name="Toppo S."/>
            <person name="Simionati B."/>
            <person name="Conrad A."/>
            <person name="Hornischer K."/>
            <person name="Kauer G."/>
            <person name="Loehnert T.-H."/>
            <person name="Nordsiek G."/>
            <person name="Reichelt J."/>
            <person name="Scharfe M."/>
            <person name="Schoen O."/>
            <person name="Bargues M."/>
            <person name="Terol J."/>
            <person name="Climent J."/>
            <person name="Navarro P."/>
            <person name="Collado C."/>
            <person name="Perez-Perez A."/>
            <person name="Ottenwaelder B."/>
            <person name="Duchemin D."/>
            <person name="Cooke R."/>
            <person name="Laudie M."/>
            <person name="Berger-Llauro C."/>
            <person name="Purnelle B."/>
            <person name="Masuy D."/>
            <person name="de Haan M."/>
            <person name="Maarse A.C."/>
            <person name="Alcaraz J.-P."/>
            <person name="Cottet A."/>
            <person name="Casacuberta E."/>
            <person name="Monfort A."/>
            <person name="Argiriou A."/>
            <person name="Flores M."/>
            <person name="Liguori R."/>
            <person name="Vitale D."/>
            <person name="Mannhaupt G."/>
            <person name="Haase D."/>
            <person name="Schoof H."/>
            <person name="Rudd S."/>
            <person name="Zaccaria P."/>
            <person name="Mewes H.-W."/>
            <person name="Mayer K.F.X."/>
            <person name="Kaul S."/>
            <person name="Town C.D."/>
            <person name="Koo H.L."/>
            <person name="Tallon L.J."/>
            <person name="Jenkins J."/>
            <person name="Rooney T."/>
            <person name="Rizzo M."/>
            <person name="Walts A."/>
            <person name="Utterback T."/>
            <person name="Fujii C.Y."/>
            <person name="Shea T.P."/>
            <person name="Creasy T.H."/>
            <person name="Haas B."/>
            <person name="Maiti R."/>
            <person name="Wu D."/>
            <person name="Peterson J."/>
            <person name="Van Aken S."/>
            <person name="Pai G."/>
            <person name="Militscher J."/>
            <person name="Sellers P."/>
            <person name="Gill J.E."/>
            <person name="Feldblyum T.V."/>
            <person name="Preuss D."/>
            <person name="Lin X."/>
            <person name="Nierman W.C."/>
            <person name="Salzberg S.L."/>
            <person name="White O."/>
            <person name="Venter J.C."/>
            <person name="Fraser C.M."/>
            <person name="Kaneko T."/>
            <person name="Nakamura Y."/>
            <person name="Sato S."/>
            <person name="Kato T."/>
            <person name="Asamizu E."/>
            <person name="Sasamoto S."/>
            <person name="Kimura T."/>
            <person name="Idesawa K."/>
            <person name="Kawashima K."/>
            <person name="Kishida Y."/>
            <person name="Kiyokawa C."/>
            <person name="Kohara M."/>
            <person name="Matsumoto M."/>
            <person name="Matsuno A."/>
            <person name="Muraki A."/>
            <person name="Nakayama S."/>
            <person name="Nakazaki N."/>
            <person name="Shinpo S."/>
            <person name="Takeuchi C."/>
            <person name="Wada T."/>
            <person name="Watanabe A."/>
            <person name="Yamada M."/>
            <person name="Yasuda M."/>
            <person name="Tabata S."/>
        </authorList>
    </citation>
    <scope>NUCLEOTIDE SEQUENCE [LARGE SCALE GENOMIC DNA]</scope>
    <source>
        <strain>cv. Columbia</strain>
    </source>
</reference>
<reference key="2">
    <citation type="journal article" date="2017" name="Plant J.">
        <title>Araport11: a complete reannotation of the Arabidopsis thaliana reference genome.</title>
        <authorList>
            <person name="Cheng C.Y."/>
            <person name="Krishnakumar V."/>
            <person name="Chan A.P."/>
            <person name="Thibaud-Nissen F."/>
            <person name="Schobel S."/>
            <person name="Town C.D."/>
        </authorList>
    </citation>
    <scope>GENOME REANNOTATION</scope>
    <source>
        <strain>cv. Columbia</strain>
    </source>
</reference>
<reference key="3">
    <citation type="journal article" date="2003" name="Science">
        <title>Empirical analysis of transcriptional activity in the Arabidopsis genome.</title>
        <authorList>
            <person name="Yamada K."/>
            <person name="Lim J."/>
            <person name="Dale J.M."/>
            <person name="Chen H."/>
            <person name="Shinn P."/>
            <person name="Palm C.J."/>
            <person name="Southwick A.M."/>
            <person name="Wu H.C."/>
            <person name="Kim C.J."/>
            <person name="Nguyen M."/>
            <person name="Pham P.K."/>
            <person name="Cheuk R.F."/>
            <person name="Karlin-Newmann G."/>
            <person name="Liu S.X."/>
            <person name="Lam B."/>
            <person name="Sakano H."/>
            <person name="Wu T."/>
            <person name="Yu G."/>
            <person name="Miranda M."/>
            <person name="Quach H.L."/>
            <person name="Tripp M."/>
            <person name="Chang C.H."/>
            <person name="Lee J.M."/>
            <person name="Toriumi M.J."/>
            <person name="Chan M.M."/>
            <person name="Tang C.C."/>
            <person name="Onodera C.S."/>
            <person name="Deng J.M."/>
            <person name="Akiyama K."/>
            <person name="Ansari Y."/>
            <person name="Arakawa T."/>
            <person name="Banh J."/>
            <person name="Banno F."/>
            <person name="Bowser L."/>
            <person name="Brooks S.Y."/>
            <person name="Carninci P."/>
            <person name="Chao Q."/>
            <person name="Choy N."/>
            <person name="Enju A."/>
            <person name="Goldsmith A.D."/>
            <person name="Gurjal M."/>
            <person name="Hansen N.F."/>
            <person name="Hayashizaki Y."/>
            <person name="Johnson-Hopson C."/>
            <person name="Hsuan V.W."/>
            <person name="Iida K."/>
            <person name="Karnes M."/>
            <person name="Khan S."/>
            <person name="Koesema E."/>
            <person name="Ishida J."/>
            <person name="Jiang P.X."/>
            <person name="Jones T."/>
            <person name="Kawai J."/>
            <person name="Kamiya A."/>
            <person name="Meyers C."/>
            <person name="Nakajima M."/>
            <person name="Narusaka M."/>
            <person name="Seki M."/>
            <person name="Sakurai T."/>
            <person name="Satou M."/>
            <person name="Tamse R."/>
            <person name="Vaysberg M."/>
            <person name="Wallender E.K."/>
            <person name="Wong C."/>
            <person name="Yamamura Y."/>
            <person name="Yuan S."/>
            <person name="Shinozaki K."/>
            <person name="Davis R.W."/>
            <person name="Theologis A."/>
            <person name="Ecker J.R."/>
        </authorList>
    </citation>
    <scope>NUCLEOTIDE SEQUENCE [LARGE SCALE MRNA]</scope>
    <source>
        <strain>cv. Columbia</strain>
    </source>
</reference>
<reference key="4">
    <citation type="journal article" date="2004" name="Plant Physiol.">
        <title>Molecular and functional characterization of a family of amino acid transporters from Arabidopsis.</title>
        <authorList>
            <person name="Su Y.-H."/>
            <person name="Frommer W.B."/>
            <person name="Ludewig U."/>
        </authorList>
    </citation>
    <scope>TISSUE SPECIFICITY</scope>
    <scope>GENE FAMILY</scope>
    <scope>NOMENCLATURE</scope>
    <source>
        <strain>cv. Columbia</strain>
    </source>
</reference>
<reference key="5">
    <citation type="journal article" date="2007" name="Mol. Cell. Proteomics">
        <title>A proteomics dissection of Arabidopsis thaliana vacuoles isolated from cell culture.</title>
        <authorList>
            <person name="Jaquinod M."/>
            <person name="Villiers F."/>
            <person name="Kieffer-Jaquinod S."/>
            <person name="Hugouvieux V."/>
            <person name="Bruley C."/>
            <person name="Garin J."/>
            <person name="Bourguignon J."/>
        </authorList>
    </citation>
    <scope>IDENTIFICATION BY MASS SPECTROMETRY</scope>
    <scope>SUBCELLULAR LOCATION [LARGE SCALE ANALYSIS]</scope>
</reference>
<name>CAAT4_ARATH</name>
<organism>
    <name type="scientific">Arabidopsis thaliana</name>
    <name type="common">Mouse-ear cress</name>
    <dbReference type="NCBI Taxonomy" id="3702"/>
    <lineage>
        <taxon>Eukaryota</taxon>
        <taxon>Viridiplantae</taxon>
        <taxon>Streptophyta</taxon>
        <taxon>Embryophyta</taxon>
        <taxon>Tracheophyta</taxon>
        <taxon>Spermatophyta</taxon>
        <taxon>Magnoliopsida</taxon>
        <taxon>eudicotyledons</taxon>
        <taxon>Gunneridae</taxon>
        <taxon>Pentapetalae</taxon>
        <taxon>rosids</taxon>
        <taxon>malvids</taxon>
        <taxon>Brassicales</taxon>
        <taxon>Brassicaceae</taxon>
        <taxon>Camelineae</taxon>
        <taxon>Arabidopsis</taxon>
    </lineage>
</organism>
<gene>
    <name type="primary">CAT4</name>
    <name type="ordered locus">At3g03720</name>
    <name type="ORF">F20H23.25</name>
</gene>
<keyword id="KW-0029">Amino-acid transport</keyword>
<keyword id="KW-0472">Membrane</keyword>
<keyword id="KW-1185">Reference proteome</keyword>
<keyword id="KW-0812">Transmembrane</keyword>
<keyword id="KW-1133">Transmembrane helix</keyword>
<keyword id="KW-0813">Transport</keyword>
<keyword id="KW-0926">Vacuole</keyword>
<accession>Q8W4K3</accession>
<accession>F4J170</accession>
<accession>Q9SRU9</accession>
<comment type="function">
    <text evidence="1">Permease involved in the transport of the cationic amino acids.</text>
</comment>
<comment type="subcellular location">
    <subcellularLocation>
        <location evidence="4">Vacuole membrane</location>
        <topology evidence="4">Multi-pass membrane protein</topology>
    </subcellularLocation>
</comment>
<comment type="tissue specificity">
    <text evidence="3">Expressed in roots, stems, flowers, and leaves.</text>
</comment>
<comment type="similarity">
    <text evidence="5">Belongs to the amino acid-polyamine-organocation (APC) superfamily. Cationic amino acid transporter (CAT) (TC 2.A.3.3) family.</text>
</comment>
<comment type="sequence caution" evidence="5">
    <conflict type="erroneous gene model prediction">
        <sequence resource="EMBL-CDS" id="AAF00645"/>
    </conflict>
</comment>
<proteinExistence type="evidence at protein level"/>